<organism>
    <name type="scientific">Mus musculus</name>
    <name type="common">Mouse</name>
    <dbReference type="NCBI Taxonomy" id="10090"/>
    <lineage>
        <taxon>Eukaryota</taxon>
        <taxon>Metazoa</taxon>
        <taxon>Chordata</taxon>
        <taxon>Craniata</taxon>
        <taxon>Vertebrata</taxon>
        <taxon>Euteleostomi</taxon>
        <taxon>Mammalia</taxon>
        <taxon>Eutheria</taxon>
        <taxon>Euarchontoglires</taxon>
        <taxon>Glires</taxon>
        <taxon>Rodentia</taxon>
        <taxon>Myomorpha</taxon>
        <taxon>Muroidea</taxon>
        <taxon>Muridae</taxon>
        <taxon>Murinae</taxon>
        <taxon>Mus</taxon>
        <taxon>Mus</taxon>
    </lineage>
</organism>
<feature type="chain" id="PRO_0000317458" description="Membrane-bound acylglycerophosphatidylinositol O-acyltransferase MBOAT7">
    <location>
        <begin position="1"/>
        <end position="473"/>
    </location>
</feature>
<feature type="topological domain" description="Cytoplasmic" evidence="1">
    <location>
        <begin position="1"/>
        <end position="5"/>
    </location>
</feature>
<feature type="transmembrane region" description="Helical" evidence="1">
    <location>
        <begin position="6"/>
        <end position="22"/>
    </location>
</feature>
<feature type="topological domain" description="Lumenal" evidence="1">
    <location>
        <begin position="23"/>
        <end position="33"/>
    </location>
</feature>
<feature type="transmembrane region" description="Helical" evidence="1">
    <location>
        <begin position="34"/>
        <end position="57"/>
    </location>
</feature>
<feature type="topological domain" description="Cytoplasmic" evidence="1">
    <location>
        <begin position="58"/>
        <end position="73"/>
    </location>
</feature>
<feature type="transmembrane region" description="Helical" evidence="1">
    <location>
        <begin position="74"/>
        <end position="93"/>
    </location>
</feature>
<feature type="topological domain" description="Lumenal" evidence="1">
    <location>
        <begin position="94"/>
        <end position="194"/>
    </location>
</feature>
<feature type="transmembrane region" description="Helical" evidence="1">
    <location>
        <begin position="195"/>
        <end position="212"/>
    </location>
</feature>
<feature type="topological domain" description="Cytoplasmic" evidence="1">
    <location>
        <begin position="213"/>
        <end position="231"/>
    </location>
</feature>
<feature type="transmembrane region" description="Helical" evidence="1">
    <location>
        <begin position="232"/>
        <end position="261"/>
    </location>
</feature>
<feature type="topological domain" description="Lumenal" evidence="1">
    <location>
        <begin position="262"/>
        <end position="426"/>
    </location>
</feature>
<feature type="transmembrane region" description="Helical" evidence="1">
    <location>
        <begin position="427"/>
        <end position="447"/>
    </location>
</feature>
<feature type="topological domain" description="Cytoplasmic" evidence="1">
    <location>
        <begin position="448"/>
        <end position="473"/>
    </location>
</feature>
<feature type="region of interest" description="Disordered" evidence="3">
    <location>
        <begin position="451"/>
        <end position="473"/>
    </location>
</feature>
<feature type="glycosylation site" description="N-linked (GlcNAc...) asparagine" evidence="2">
    <location>
        <position position="321"/>
    </location>
</feature>
<feature type="sequence conflict" description="In Ref. 3; BAB31950." evidence="8" ref="3">
    <original>S</original>
    <variation>R</variation>
    <location>
        <position position="335"/>
    </location>
</feature>
<feature type="sequence conflict" description="In Ref. 3; BAE41580 and 4; AAI18959/AAH23417." evidence="8" ref="3 4">
    <original>R</original>
    <variation>C</variation>
    <location>
        <position position="339"/>
    </location>
</feature>
<feature type="sequence conflict" description="In Ref. 3; BAE29235." evidence="8" ref="3">
    <original>Y</original>
    <variation>C</variation>
    <location>
        <position position="341"/>
    </location>
</feature>
<feature type="sequence conflict" description="In Ref. 3; BAE29235." evidence="8" ref="3">
    <original>H</original>
    <variation>Q</variation>
    <location>
        <position position="386"/>
    </location>
</feature>
<proteinExistence type="evidence at protein level"/>
<gene>
    <name evidence="9" type="primary">Mboat7</name>
    <name type="synonym">Bb1</name>
    <name type="synonym">Leng4</name>
    <name evidence="7" type="synonym">Lpiat1</name>
    <name type="synonym">Oact7</name>
</gene>
<dbReference type="EC" id="2.3.1.-" evidence="4 5"/>
<dbReference type="EMBL" id="AB055410">
    <property type="protein sequence ID" value="BAC53808.1"/>
    <property type="molecule type" value="mRNA"/>
</dbReference>
<dbReference type="EMBL" id="EU016380">
    <property type="protein sequence ID" value="ABV66272.1"/>
    <property type="molecule type" value="mRNA"/>
</dbReference>
<dbReference type="EMBL" id="AK019981">
    <property type="protein sequence ID" value="BAB31950.1"/>
    <property type="molecule type" value="mRNA"/>
</dbReference>
<dbReference type="EMBL" id="AK150010">
    <property type="protein sequence ID" value="BAE29235.1"/>
    <property type="molecule type" value="mRNA"/>
</dbReference>
<dbReference type="EMBL" id="AK154606">
    <property type="protein sequence ID" value="BAE32708.1"/>
    <property type="molecule type" value="mRNA"/>
</dbReference>
<dbReference type="EMBL" id="AK170124">
    <property type="protein sequence ID" value="BAE41580.1"/>
    <property type="molecule type" value="mRNA"/>
</dbReference>
<dbReference type="EMBL" id="BC023417">
    <property type="protein sequence ID" value="AAH23417.1"/>
    <property type="molecule type" value="mRNA"/>
</dbReference>
<dbReference type="EMBL" id="BC118958">
    <property type="protein sequence ID" value="AAI18959.1"/>
    <property type="molecule type" value="mRNA"/>
</dbReference>
<dbReference type="CCDS" id="CCDS20724.1"/>
<dbReference type="RefSeq" id="NP_084210.2">
    <property type="nucleotide sequence ID" value="NM_029934.3"/>
</dbReference>
<dbReference type="RefSeq" id="XP_006540495.1">
    <property type="nucleotide sequence ID" value="XM_006540432.5"/>
</dbReference>
<dbReference type="SMR" id="Q8CHK3"/>
<dbReference type="BioGRID" id="218777">
    <property type="interactions" value="5"/>
</dbReference>
<dbReference type="FunCoup" id="Q8CHK3">
    <property type="interactions" value="1345"/>
</dbReference>
<dbReference type="STRING" id="10090.ENSMUSP00000037107"/>
<dbReference type="SwissLipids" id="SLP:000000285"/>
<dbReference type="GlyCosmos" id="Q8CHK3">
    <property type="glycosylation" value="1 site, No reported glycans"/>
</dbReference>
<dbReference type="GlyGen" id="Q8CHK3">
    <property type="glycosylation" value="3 sites, 1 O-linked glycan (1 site)"/>
</dbReference>
<dbReference type="iPTMnet" id="Q8CHK3"/>
<dbReference type="PhosphoSitePlus" id="Q8CHK3"/>
<dbReference type="SwissPalm" id="Q8CHK3"/>
<dbReference type="jPOST" id="Q8CHK3"/>
<dbReference type="PaxDb" id="10090-ENSMUSP00000037107"/>
<dbReference type="PeptideAtlas" id="Q8CHK3"/>
<dbReference type="ProteomicsDB" id="295972"/>
<dbReference type="Pumba" id="Q8CHK3"/>
<dbReference type="Antibodypedia" id="32830">
    <property type="antibodies" value="116 antibodies from 20 providers"/>
</dbReference>
<dbReference type="Ensembl" id="ENSMUST00000038608.14">
    <property type="protein sequence ID" value="ENSMUSP00000037107.8"/>
    <property type="gene ID" value="ENSMUSG00000035596.15"/>
</dbReference>
<dbReference type="GeneID" id="77582"/>
<dbReference type="KEGG" id="mmu:77582"/>
<dbReference type="UCSC" id="uc009evq.1">
    <property type="organism name" value="mouse"/>
</dbReference>
<dbReference type="AGR" id="MGI:1924832"/>
<dbReference type="CTD" id="79143"/>
<dbReference type="MGI" id="MGI:1924832">
    <property type="gene designation" value="Mboat7"/>
</dbReference>
<dbReference type="VEuPathDB" id="HostDB:ENSMUSG00000035596"/>
<dbReference type="eggNOG" id="KOG2706">
    <property type="taxonomic scope" value="Eukaryota"/>
</dbReference>
<dbReference type="GeneTree" id="ENSGT01030000234564"/>
<dbReference type="HOGENOM" id="CLU_011340_1_1_1"/>
<dbReference type="InParanoid" id="Q8CHK3"/>
<dbReference type="OMA" id="TNMIQML"/>
<dbReference type="OrthoDB" id="7663182at2759"/>
<dbReference type="PhylomeDB" id="Q8CHK3"/>
<dbReference type="TreeFam" id="TF320024"/>
<dbReference type="BRENDA" id="2.3.1.B46">
    <property type="organism ID" value="3474"/>
</dbReference>
<dbReference type="Reactome" id="R-MMU-1482922">
    <property type="pathway name" value="Acyl chain remodelling of PI"/>
</dbReference>
<dbReference type="UniPathway" id="UPA00085"/>
<dbReference type="BioGRID-ORCS" id="77582">
    <property type="hits" value="7 hits in 81 CRISPR screens"/>
</dbReference>
<dbReference type="ChiTaRS" id="Mboat7">
    <property type="organism name" value="mouse"/>
</dbReference>
<dbReference type="PRO" id="PR:Q8CHK3"/>
<dbReference type="Proteomes" id="UP000000589">
    <property type="component" value="Chromosome 7"/>
</dbReference>
<dbReference type="RNAct" id="Q8CHK3">
    <property type="molecule type" value="protein"/>
</dbReference>
<dbReference type="Bgee" id="ENSMUSG00000035596">
    <property type="expression patterns" value="Expressed in granulocyte and 253 other cell types or tissues"/>
</dbReference>
<dbReference type="ExpressionAtlas" id="Q8CHK3">
    <property type="expression patterns" value="baseline and differential"/>
</dbReference>
<dbReference type="GO" id="GO:0005789">
    <property type="term" value="C:endoplasmic reticulum membrane"/>
    <property type="evidence" value="ECO:0007669"/>
    <property type="project" value="UniProtKB-SubCell"/>
</dbReference>
<dbReference type="GO" id="GO:0016020">
    <property type="term" value="C:membrane"/>
    <property type="evidence" value="ECO:0000314"/>
    <property type="project" value="MGI"/>
</dbReference>
<dbReference type="GO" id="GO:0044233">
    <property type="term" value="C:mitochondria-associated endoplasmic reticulum membrane contact site"/>
    <property type="evidence" value="ECO:0000250"/>
    <property type="project" value="UniProtKB"/>
</dbReference>
<dbReference type="GO" id="GO:0071617">
    <property type="term" value="F:lysophospholipid acyltransferase activity"/>
    <property type="evidence" value="ECO:0000315"/>
    <property type="project" value="MGI"/>
</dbReference>
<dbReference type="GO" id="GO:0008374">
    <property type="term" value="F:O-acyltransferase activity"/>
    <property type="evidence" value="ECO:0000315"/>
    <property type="project" value="UniProtKB"/>
</dbReference>
<dbReference type="GO" id="GO:0021819">
    <property type="term" value="P:layer formation in cerebral cortex"/>
    <property type="evidence" value="ECO:0000315"/>
    <property type="project" value="MGI"/>
</dbReference>
<dbReference type="GO" id="GO:0036151">
    <property type="term" value="P:phosphatidylcholine acyl-chain remodeling"/>
    <property type="evidence" value="ECO:0000250"/>
    <property type="project" value="UniProtKB"/>
</dbReference>
<dbReference type="GO" id="GO:0036149">
    <property type="term" value="P:phosphatidylinositol acyl-chain remodeling"/>
    <property type="evidence" value="ECO:0000315"/>
    <property type="project" value="UniProtKB"/>
</dbReference>
<dbReference type="GO" id="GO:0006661">
    <property type="term" value="P:phosphatidylinositol biosynthetic process"/>
    <property type="evidence" value="ECO:0000250"/>
    <property type="project" value="UniProtKB"/>
</dbReference>
<dbReference type="GO" id="GO:0046488">
    <property type="term" value="P:phosphatidylinositol metabolic process"/>
    <property type="evidence" value="ECO:0000315"/>
    <property type="project" value="MGI"/>
</dbReference>
<dbReference type="GO" id="GO:0090207">
    <property type="term" value="P:regulation of triglyceride metabolic process"/>
    <property type="evidence" value="ECO:0000315"/>
    <property type="project" value="UniProtKB"/>
</dbReference>
<dbReference type="GO" id="GO:0021591">
    <property type="term" value="P:ventricular system development"/>
    <property type="evidence" value="ECO:0000315"/>
    <property type="project" value="MGI"/>
</dbReference>
<dbReference type="InterPro" id="IPR049941">
    <property type="entry name" value="LPLAT_7/PORCN-like"/>
</dbReference>
<dbReference type="InterPro" id="IPR004299">
    <property type="entry name" value="MBOAT_fam"/>
</dbReference>
<dbReference type="PANTHER" id="PTHR13906:SF16">
    <property type="entry name" value="LYSOPHOSPHOLIPID ACYLTRANSFERASE 7"/>
    <property type="match status" value="1"/>
</dbReference>
<dbReference type="PANTHER" id="PTHR13906">
    <property type="entry name" value="PORCUPINE"/>
    <property type="match status" value="1"/>
</dbReference>
<dbReference type="Pfam" id="PF03062">
    <property type="entry name" value="MBOAT"/>
    <property type="match status" value="1"/>
</dbReference>
<evidence type="ECO:0000250" key="1">
    <source>
        <dbReference type="UniProtKB" id="Q96N66"/>
    </source>
</evidence>
<evidence type="ECO:0000255" key="2"/>
<evidence type="ECO:0000256" key="3">
    <source>
        <dbReference type="SAM" id="MobiDB-lite"/>
    </source>
</evidence>
<evidence type="ECO:0000269" key="4">
    <source>
    </source>
</evidence>
<evidence type="ECO:0000269" key="5">
    <source>
    </source>
</evidence>
<evidence type="ECO:0000269" key="6">
    <source>
    </source>
</evidence>
<evidence type="ECO:0000303" key="7">
    <source>
    </source>
</evidence>
<evidence type="ECO:0000305" key="8"/>
<evidence type="ECO:0000312" key="9">
    <source>
        <dbReference type="MGI" id="MGI:1924832"/>
    </source>
</evidence>
<accession>Q8CHK3</accession>
<accession>Q3UDM6</accession>
<accession>Q8R1P9</accession>
<accession>Q9CY76</accession>
<keyword id="KW-0012">Acyltransferase</keyword>
<keyword id="KW-0256">Endoplasmic reticulum</keyword>
<keyword id="KW-0325">Glycoprotein</keyword>
<keyword id="KW-0444">Lipid biosynthesis</keyword>
<keyword id="KW-0443">Lipid metabolism</keyword>
<keyword id="KW-0472">Membrane</keyword>
<keyword id="KW-0594">Phospholipid biosynthesis</keyword>
<keyword id="KW-1208">Phospholipid metabolism</keyword>
<keyword id="KW-1185">Reference proteome</keyword>
<keyword id="KW-0808">Transferase</keyword>
<keyword id="KW-0812">Transmembrane</keyword>
<keyword id="KW-1133">Transmembrane helix</keyword>
<name>MBOA7_MOUSE</name>
<sequence>MTPEEWTYLMVLLISIPVGFLFKKAGPGLKRWGAAAVGLGLTLFTCGPHSLHSLITILGTWALIQAQPCSCHALALAWTFSYLLFFRALSLLGLPTPTPFTNAVQLLLTLKLVSLASEVQDLHLAQRKEIASGFHKEPTLGLLPEVPSLMETLSYSYCYVGIMTGPFFRYRTYLDWLEQPFPEAVPSLRPLLRRAWPAPLFGLLFLLSSHLFPLEAVREDAFYARPLPTRLFYMIPVFFAFRMRFYVAWIAAECGCIAAGFGAYPVAAKARAGGGPTLQCPPPSSPEIAASLEYDYETIRNIDCYGTDFCVRVRDGMRYWNMTVQWWLAQYIYKSAPFRSYVLRSAWTMLLSAYWHGLHPGYYLSFMTIPLCLAAEGYLESALRRHLSPGGQKAWDWVHWFLKMRAYDYMCMGFVLLSMADTLRYWASIYFWVHFLALACLGLGLVLGGGSPSKRKTPSQATSSQAKEKLREE</sequence>
<comment type="function">
    <text evidence="4 5 6">Acyltransferase which catalyzes the transfer of an acyl group from an acyl-CoA to a lysophosphatidylinositol (1-acylglycerophosphatidylinositol or LPI) leading to the production of a phosphatidylinositol (1,2-diacyl-sn-glycero-3-phosphoinositol or PI) and participates in the reacylation step of the phospholipid remodeling pathway also known as the Lands cycle (PubMed:23097495, PubMed:23472195, PubMed:32253259). Prefers arachidonoyl-CoA as the acyl donor, thus contributing to the regulation of free levels arachidonic acid in cell (PubMed:23097495, PubMed:23472195). In liver, participates in the regulation of triglyceride metabolism through the phosphatidylinositol acyl-chain remodeling regulation (PubMed:32253259).</text>
</comment>
<comment type="catalytic activity">
    <reaction evidence="4 5">
        <text>a 1-acyl-sn-glycero-3-phospho-(1D-myo-inositol) + an acyl-CoA = a 1,2-diacyl-sn-glycero-3-phospho-(1D-myo-inositol) + CoA</text>
        <dbReference type="Rhea" id="RHEA:33195"/>
        <dbReference type="ChEBI" id="CHEBI:57287"/>
        <dbReference type="ChEBI" id="CHEBI:57880"/>
        <dbReference type="ChEBI" id="CHEBI:58342"/>
        <dbReference type="ChEBI" id="CHEBI:64771"/>
    </reaction>
    <physiologicalReaction direction="left-to-right" evidence="4 5">
        <dbReference type="Rhea" id="RHEA:33196"/>
    </physiologicalReaction>
</comment>
<comment type="catalytic activity">
    <reaction evidence="4 5">
        <text>1-octadecanoyl-sn-glycero-3-phospho-(1D-myo-inositol) + (5Z,8Z,11Z,14Z)-eicosatetraenoyl-CoA = 1-octadecanoyl-2-(5Z,8Z,11Z,14Z-eicosatetraenoyl)-sn-glycero-3-phospho-(1D-myo-inositol) + CoA</text>
        <dbReference type="Rhea" id="RHEA:36835"/>
        <dbReference type="ChEBI" id="CHEBI:57287"/>
        <dbReference type="ChEBI" id="CHEBI:57368"/>
        <dbReference type="ChEBI" id="CHEBI:74243"/>
        <dbReference type="ChEBI" id="CHEBI:133606"/>
    </reaction>
    <physiologicalReaction direction="left-to-right" evidence="4 5">
        <dbReference type="Rhea" id="RHEA:36836"/>
    </physiologicalReaction>
</comment>
<comment type="catalytic activity">
    <reaction evidence="4 5">
        <text>a 1-acyl-sn-glycero-3-phospho-(1D-myo-inositol) + (5Z,8Z,11Z,14Z)-eicosatetraenoyl-CoA = a 1-acyl-2-(5Z,8Z,11Z,14Z-eicosatetraenoyl)-sn-glycero-3-phospho-(1D-myo-inositol) + CoA</text>
        <dbReference type="Rhea" id="RHEA:37015"/>
        <dbReference type="ChEBI" id="CHEBI:57287"/>
        <dbReference type="ChEBI" id="CHEBI:57368"/>
        <dbReference type="ChEBI" id="CHEBI:64771"/>
        <dbReference type="ChEBI" id="CHEBI:75243"/>
    </reaction>
    <physiologicalReaction direction="left-to-right" evidence="4 5">
        <dbReference type="Rhea" id="RHEA:37016"/>
    </physiologicalReaction>
</comment>
<comment type="catalytic activity">
    <reaction evidence="1">
        <text>(5Z,8Z,11Z,14Z)-eicosatetraenoyl-CoA + 1-hexadecanoyl-sn-glycero-3-phosphocholine = 1-hexadecanoyl-2-(5Z,8Z,11Z,14Z-eicosatetraenoyl)-sn-glycero-3-phosphocholine + CoA</text>
        <dbReference type="Rhea" id="RHEA:35999"/>
        <dbReference type="ChEBI" id="CHEBI:57287"/>
        <dbReference type="ChEBI" id="CHEBI:57368"/>
        <dbReference type="ChEBI" id="CHEBI:72998"/>
        <dbReference type="ChEBI" id="CHEBI:73003"/>
    </reaction>
    <physiologicalReaction direction="left-to-right" evidence="1">
        <dbReference type="Rhea" id="RHEA:36000"/>
    </physiologicalReaction>
</comment>
<comment type="pathway">
    <text evidence="4 5">Lipid metabolism; phospholipid metabolism.</text>
</comment>
<comment type="subunit">
    <text evidence="1">Interacts with SPTSSA; the interaction facilitates MBOAT7 location to mitochondria-associated membranes (MAMs).</text>
</comment>
<comment type="subcellular location">
    <subcellularLocation>
        <location evidence="1">Endoplasmic reticulum membrane</location>
        <topology evidence="1">Multi-pass membrane protein</topology>
    </subcellularLocation>
    <text evidence="1">Localized in specific membrane structures termed mitochondria-associated membranes (MAMs) which connect the endoplasmic reticulum (ER) and the mitochondria.</text>
</comment>
<comment type="disruption phenotype">
    <text evidence="4 5 6">Knockout mice die within a month and show atrophy of the cerebral cortex and hippocampus. Embryos at 18.5 dpc have a forebrain smaller in size and show disordered cortical lamination and delayed neuronal migration in the cortex (PubMed:23097495, PubMed:23472195). Mice with conditional knockout in hepatocyte develop hepatic steatosis spontaneously, and hepatic fibrosis on high fat diet feeding (PubMed:32253259).</text>
</comment>
<comment type="similarity">
    <text evidence="8">Belongs to the membrane-bound acyltransferase family.</text>
</comment>
<protein>
    <recommendedName>
        <fullName evidence="1">Membrane-bound acylglycerophosphatidylinositol O-acyltransferase MBOAT7</fullName>
        <ecNumber evidence="4 5">2.3.1.-</ecNumber>
    </recommendedName>
    <alternativeName>
        <fullName evidence="8">1-acylglycerophosphatidylinositol O-acyltransferase</fullName>
    </alternativeName>
    <alternativeName>
        <fullName evidence="8">Bladder and breast carcinoma-overexpressed gene 1 protein</fullName>
    </alternativeName>
    <alternativeName>
        <fullName evidence="8">Leukocyte receptor cluster member 4</fullName>
    </alternativeName>
    <alternativeName>
        <fullName evidence="7">Lysophosphatidylinositol acyltransferase 1</fullName>
        <shortName evidence="7">LPIAT1</shortName>
    </alternativeName>
    <alternativeName>
        <fullName evidence="8">Lysophospholipid acyltransferase 7</fullName>
        <shortName evidence="8">LPLAT 7</shortName>
    </alternativeName>
    <alternativeName>
        <fullName evidence="8">Membrane-bound O-acyltransferase domain-containing protein 7</fullName>
        <shortName evidence="8">O-acyltransferase domain-containing protein 7</shortName>
        <shortName evidence="8">m-mboa-7</shortName>
    </alternativeName>
</protein>
<reference key="1">
    <citation type="journal article" date="2004" name="J. Gastroenterol.">
        <title>Isolation of novel mouse genes that were differentially expressed in W/W(v) mouse fundus.</title>
        <authorList>
            <person name="Daigo Y."/>
            <person name="Takayama I."/>
            <person name="Ward S.M."/>
            <person name="Sanders K.M."/>
            <person name="Fujino M.A."/>
        </authorList>
    </citation>
    <scope>NUCLEOTIDE SEQUENCE [MRNA]</scope>
    <source>
        <strain>W/Wv</strain>
    </source>
</reference>
<reference key="2">
    <citation type="journal article" date="2008" name="Mol. Biol. Cell">
        <title>Caenorhabditis elegans mboa-7, a member of the MBOAT family, is required for selective incorporation of polyunsaturated fatty acids into phosphatidylinositol.</title>
        <authorList>
            <person name="Lee H.C."/>
            <person name="Inoue T."/>
            <person name="Imae R."/>
            <person name="Kono N."/>
            <person name="Shirae S."/>
            <person name="Matsuda S."/>
            <person name="Gengyo-Ando K."/>
            <person name="Mitani S."/>
            <person name="Arai H."/>
        </authorList>
    </citation>
    <scope>NUCLEOTIDE SEQUENCE [MRNA]</scope>
    <source>
        <tissue>Liver</tissue>
    </source>
</reference>
<reference key="3">
    <citation type="journal article" date="2005" name="Science">
        <title>The transcriptional landscape of the mammalian genome.</title>
        <authorList>
            <person name="Carninci P."/>
            <person name="Kasukawa T."/>
            <person name="Katayama S."/>
            <person name="Gough J."/>
            <person name="Frith M.C."/>
            <person name="Maeda N."/>
            <person name="Oyama R."/>
            <person name="Ravasi T."/>
            <person name="Lenhard B."/>
            <person name="Wells C."/>
            <person name="Kodzius R."/>
            <person name="Shimokawa K."/>
            <person name="Bajic V.B."/>
            <person name="Brenner S.E."/>
            <person name="Batalov S."/>
            <person name="Forrest A.R."/>
            <person name="Zavolan M."/>
            <person name="Davis M.J."/>
            <person name="Wilming L.G."/>
            <person name="Aidinis V."/>
            <person name="Allen J.E."/>
            <person name="Ambesi-Impiombato A."/>
            <person name="Apweiler R."/>
            <person name="Aturaliya R.N."/>
            <person name="Bailey T.L."/>
            <person name="Bansal M."/>
            <person name="Baxter L."/>
            <person name="Beisel K.W."/>
            <person name="Bersano T."/>
            <person name="Bono H."/>
            <person name="Chalk A.M."/>
            <person name="Chiu K.P."/>
            <person name="Choudhary V."/>
            <person name="Christoffels A."/>
            <person name="Clutterbuck D.R."/>
            <person name="Crowe M.L."/>
            <person name="Dalla E."/>
            <person name="Dalrymple B.P."/>
            <person name="de Bono B."/>
            <person name="Della Gatta G."/>
            <person name="di Bernardo D."/>
            <person name="Down T."/>
            <person name="Engstrom P."/>
            <person name="Fagiolini M."/>
            <person name="Faulkner G."/>
            <person name="Fletcher C.F."/>
            <person name="Fukushima T."/>
            <person name="Furuno M."/>
            <person name="Futaki S."/>
            <person name="Gariboldi M."/>
            <person name="Georgii-Hemming P."/>
            <person name="Gingeras T.R."/>
            <person name="Gojobori T."/>
            <person name="Green R.E."/>
            <person name="Gustincich S."/>
            <person name="Harbers M."/>
            <person name="Hayashi Y."/>
            <person name="Hensch T.K."/>
            <person name="Hirokawa N."/>
            <person name="Hill D."/>
            <person name="Huminiecki L."/>
            <person name="Iacono M."/>
            <person name="Ikeo K."/>
            <person name="Iwama A."/>
            <person name="Ishikawa T."/>
            <person name="Jakt M."/>
            <person name="Kanapin A."/>
            <person name="Katoh M."/>
            <person name="Kawasawa Y."/>
            <person name="Kelso J."/>
            <person name="Kitamura H."/>
            <person name="Kitano H."/>
            <person name="Kollias G."/>
            <person name="Krishnan S.P."/>
            <person name="Kruger A."/>
            <person name="Kummerfeld S.K."/>
            <person name="Kurochkin I.V."/>
            <person name="Lareau L.F."/>
            <person name="Lazarevic D."/>
            <person name="Lipovich L."/>
            <person name="Liu J."/>
            <person name="Liuni S."/>
            <person name="McWilliam S."/>
            <person name="Madan Babu M."/>
            <person name="Madera M."/>
            <person name="Marchionni L."/>
            <person name="Matsuda H."/>
            <person name="Matsuzawa S."/>
            <person name="Miki H."/>
            <person name="Mignone F."/>
            <person name="Miyake S."/>
            <person name="Morris K."/>
            <person name="Mottagui-Tabar S."/>
            <person name="Mulder N."/>
            <person name="Nakano N."/>
            <person name="Nakauchi H."/>
            <person name="Ng P."/>
            <person name="Nilsson R."/>
            <person name="Nishiguchi S."/>
            <person name="Nishikawa S."/>
            <person name="Nori F."/>
            <person name="Ohara O."/>
            <person name="Okazaki Y."/>
            <person name="Orlando V."/>
            <person name="Pang K.C."/>
            <person name="Pavan W.J."/>
            <person name="Pavesi G."/>
            <person name="Pesole G."/>
            <person name="Petrovsky N."/>
            <person name="Piazza S."/>
            <person name="Reed J."/>
            <person name="Reid J.F."/>
            <person name="Ring B.Z."/>
            <person name="Ringwald M."/>
            <person name="Rost B."/>
            <person name="Ruan Y."/>
            <person name="Salzberg S.L."/>
            <person name="Sandelin A."/>
            <person name="Schneider C."/>
            <person name="Schoenbach C."/>
            <person name="Sekiguchi K."/>
            <person name="Semple C.A."/>
            <person name="Seno S."/>
            <person name="Sessa L."/>
            <person name="Sheng Y."/>
            <person name="Shibata Y."/>
            <person name="Shimada H."/>
            <person name="Shimada K."/>
            <person name="Silva D."/>
            <person name="Sinclair B."/>
            <person name="Sperling S."/>
            <person name="Stupka E."/>
            <person name="Sugiura K."/>
            <person name="Sultana R."/>
            <person name="Takenaka Y."/>
            <person name="Taki K."/>
            <person name="Tammoja K."/>
            <person name="Tan S.L."/>
            <person name="Tang S."/>
            <person name="Taylor M.S."/>
            <person name="Tegner J."/>
            <person name="Teichmann S.A."/>
            <person name="Ueda H.R."/>
            <person name="van Nimwegen E."/>
            <person name="Verardo R."/>
            <person name="Wei C.L."/>
            <person name="Yagi K."/>
            <person name="Yamanishi H."/>
            <person name="Zabarovsky E."/>
            <person name="Zhu S."/>
            <person name="Zimmer A."/>
            <person name="Hide W."/>
            <person name="Bult C."/>
            <person name="Grimmond S.M."/>
            <person name="Teasdale R.D."/>
            <person name="Liu E.T."/>
            <person name="Brusic V."/>
            <person name="Quackenbush J."/>
            <person name="Wahlestedt C."/>
            <person name="Mattick J.S."/>
            <person name="Hume D.A."/>
            <person name="Kai C."/>
            <person name="Sasaki D."/>
            <person name="Tomaru Y."/>
            <person name="Fukuda S."/>
            <person name="Kanamori-Katayama M."/>
            <person name="Suzuki M."/>
            <person name="Aoki J."/>
            <person name="Arakawa T."/>
            <person name="Iida J."/>
            <person name="Imamura K."/>
            <person name="Itoh M."/>
            <person name="Kato T."/>
            <person name="Kawaji H."/>
            <person name="Kawagashira N."/>
            <person name="Kawashima T."/>
            <person name="Kojima M."/>
            <person name="Kondo S."/>
            <person name="Konno H."/>
            <person name="Nakano K."/>
            <person name="Ninomiya N."/>
            <person name="Nishio T."/>
            <person name="Okada M."/>
            <person name="Plessy C."/>
            <person name="Shibata K."/>
            <person name="Shiraki T."/>
            <person name="Suzuki S."/>
            <person name="Tagami M."/>
            <person name="Waki K."/>
            <person name="Watahiki A."/>
            <person name="Okamura-Oho Y."/>
            <person name="Suzuki H."/>
            <person name="Kawai J."/>
            <person name="Hayashizaki Y."/>
        </authorList>
    </citation>
    <scope>NUCLEOTIDE SEQUENCE [LARGE SCALE MRNA]</scope>
    <source>
        <strain>C57BL/6J</strain>
        <strain>NOD</strain>
        <tissue>Bone marrow</tissue>
    </source>
</reference>
<reference key="4">
    <citation type="journal article" date="2004" name="Genome Res.">
        <title>The status, quality, and expansion of the NIH full-length cDNA project: the Mammalian Gene Collection (MGC).</title>
        <authorList>
            <consortium name="The MGC Project Team"/>
        </authorList>
    </citation>
    <scope>NUCLEOTIDE SEQUENCE [LARGE SCALE MRNA]</scope>
    <source>
        <strain>FVB/N</strain>
        <tissue>Mammary tumor</tissue>
    </source>
</reference>
<reference key="5">
    <citation type="journal article" date="2010" name="Cell">
        <title>A tissue-specific atlas of mouse protein phosphorylation and expression.</title>
        <authorList>
            <person name="Huttlin E.L."/>
            <person name="Jedrychowski M.P."/>
            <person name="Elias J.E."/>
            <person name="Goswami T."/>
            <person name="Rad R."/>
            <person name="Beausoleil S.A."/>
            <person name="Villen J."/>
            <person name="Haas W."/>
            <person name="Sowa M.E."/>
            <person name="Gygi S.P."/>
        </authorList>
    </citation>
    <scope>IDENTIFICATION BY MASS SPECTROMETRY [LARGE SCALE ANALYSIS]</scope>
    <source>
        <tissue>Kidney</tissue>
        <tissue>Liver</tissue>
        <tissue>Lung</tissue>
        <tissue>Spleen</tissue>
        <tissue>Testis</tissue>
    </source>
</reference>
<reference key="6">
    <citation type="journal article" date="2012" name="Mol. Biol. Cell">
        <title>LPIAT1 regulates arachidonic acid content in phosphatidylinositol and is required for cortical lamination in mice.</title>
        <authorList>
            <person name="Lee H.C."/>
            <person name="Inoue T."/>
            <person name="Sasaki J."/>
            <person name="Kubo T."/>
            <person name="Matsuda S."/>
            <person name="Nakasaki Y."/>
            <person name="Hattori M."/>
            <person name="Tanaka F."/>
            <person name="Udagawa O."/>
            <person name="Kono N."/>
            <person name="Itoh T."/>
            <person name="Ogiso H."/>
            <person name="Taguchi R."/>
            <person name="Arita M."/>
            <person name="Sasaki T."/>
            <person name="Arai H."/>
        </authorList>
    </citation>
    <scope>FUNCTION</scope>
    <scope>DISRUPTION PHENOTYPE</scope>
    <scope>CATALYTIC ACTIVITY</scope>
</reference>
<reference key="7">
    <citation type="journal article" date="2013" name="PLoS ONE">
        <title>Lysophosphatidylinositol-acyltransferase-1 (LPIAT1) is required to maintain physiological levels of PtdIns and PtdInsP(2) in the mouse.</title>
        <authorList>
            <person name="Anderson K.E."/>
            <person name="Kielkowska A."/>
            <person name="Durrant T.N."/>
            <person name="Juvin V."/>
            <person name="Clark J."/>
            <person name="Stephens L.R."/>
            <person name="Hawkins P.T."/>
        </authorList>
    </citation>
    <scope>FUNCTION</scope>
    <scope>CATALYTIC ACTIVITY</scope>
    <scope>DISRUPTION PHENOTYPE</scope>
</reference>
<reference key="8">
    <citation type="journal article" date="2021" name="Gut">
        <title>LPIAT1/MBOAT7 depletion increases triglyceride synthesis fueled by high phosphatidylinositol turnover.</title>
        <authorList>
            <person name="Tanaka Y."/>
            <person name="Shimanaka Y."/>
            <person name="Caddeo A."/>
            <person name="Kubo T."/>
            <person name="Mao Y."/>
            <person name="Kubota T."/>
            <person name="Kubota N."/>
            <person name="Yamauchi T."/>
            <person name="Mancina R.M."/>
            <person name="Baselli G."/>
            <person name="Luukkonen P."/>
            <person name="Pihlajamaeki J."/>
            <person name="Yki-Jaervinen H."/>
            <person name="Valenti L."/>
            <person name="Arai H."/>
            <person name="Romeo S."/>
            <person name="Kono N."/>
        </authorList>
    </citation>
    <scope>DISRUPTION PHENOTYPE</scope>
    <scope>FUNCTION</scope>
</reference>